<name>RSMA_PSEF5</name>
<comment type="function">
    <text evidence="1">Specifically dimethylates two adjacent adenosines (A1518 and A1519) in the loop of a conserved hairpin near the 3'-end of 16S rRNA in the 30S particle. May play a critical role in biogenesis of 30S subunits.</text>
</comment>
<comment type="catalytic activity">
    <reaction evidence="1">
        <text>adenosine(1518)/adenosine(1519) in 16S rRNA + 4 S-adenosyl-L-methionine = N(6)-dimethyladenosine(1518)/N(6)-dimethyladenosine(1519) in 16S rRNA + 4 S-adenosyl-L-homocysteine + 4 H(+)</text>
        <dbReference type="Rhea" id="RHEA:19609"/>
        <dbReference type="Rhea" id="RHEA-COMP:10232"/>
        <dbReference type="Rhea" id="RHEA-COMP:10233"/>
        <dbReference type="ChEBI" id="CHEBI:15378"/>
        <dbReference type="ChEBI" id="CHEBI:57856"/>
        <dbReference type="ChEBI" id="CHEBI:59789"/>
        <dbReference type="ChEBI" id="CHEBI:74411"/>
        <dbReference type="ChEBI" id="CHEBI:74493"/>
        <dbReference type="EC" id="2.1.1.182"/>
    </reaction>
</comment>
<comment type="subcellular location">
    <subcellularLocation>
        <location evidence="1">Cytoplasm</location>
    </subcellularLocation>
</comment>
<comment type="similarity">
    <text evidence="1">Belongs to the class I-like SAM-binding methyltransferase superfamily. rRNA adenine N(6)-methyltransferase family. RsmA subfamily.</text>
</comment>
<gene>
    <name evidence="1" type="primary">rsmA</name>
    <name evidence="1" type="synonym">ksgA</name>
    <name type="ordered locus">PFL_5649</name>
</gene>
<evidence type="ECO:0000255" key="1">
    <source>
        <dbReference type="HAMAP-Rule" id="MF_00607"/>
    </source>
</evidence>
<reference key="1">
    <citation type="journal article" date="2005" name="Nat. Biotechnol.">
        <title>Complete genome sequence of the plant commensal Pseudomonas fluorescens Pf-5.</title>
        <authorList>
            <person name="Paulsen I.T."/>
            <person name="Press C.M."/>
            <person name="Ravel J."/>
            <person name="Kobayashi D.Y."/>
            <person name="Myers G.S.A."/>
            <person name="Mavrodi D.V."/>
            <person name="DeBoy R.T."/>
            <person name="Seshadri R."/>
            <person name="Ren Q."/>
            <person name="Madupu R."/>
            <person name="Dodson R.J."/>
            <person name="Durkin A.S."/>
            <person name="Brinkac L.M."/>
            <person name="Daugherty S.C."/>
            <person name="Sullivan S.A."/>
            <person name="Rosovitz M.J."/>
            <person name="Gwinn M.L."/>
            <person name="Zhou L."/>
            <person name="Schneider D.J."/>
            <person name="Cartinhour S.W."/>
            <person name="Nelson W.C."/>
            <person name="Weidman J."/>
            <person name="Watkins K."/>
            <person name="Tran K."/>
            <person name="Khouri H."/>
            <person name="Pierson E.A."/>
            <person name="Pierson L.S. III"/>
            <person name="Thomashow L.S."/>
            <person name="Loper J.E."/>
        </authorList>
    </citation>
    <scope>NUCLEOTIDE SEQUENCE [LARGE SCALE GENOMIC DNA]</scope>
    <source>
        <strain>ATCC BAA-477 / NRRL B-23932 / Pf-5</strain>
    </source>
</reference>
<protein>
    <recommendedName>
        <fullName evidence="1">Ribosomal RNA small subunit methyltransferase A</fullName>
        <ecNumber evidence="1">2.1.1.182</ecNumber>
    </recommendedName>
    <alternativeName>
        <fullName evidence="1">16S rRNA (adenine(1518)-N(6)/adenine(1519)-N(6))-dimethyltransferase</fullName>
    </alternativeName>
    <alternativeName>
        <fullName evidence="1">16S rRNA dimethyladenosine transferase</fullName>
    </alternativeName>
    <alternativeName>
        <fullName evidence="1">16S rRNA dimethylase</fullName>
    </alternativeName>
    <alternativeName>
        <fullName evidence="1">S-adenosylmethionine-6-N', N'-adenosyl(rRNA) dimethyltransferase</fullName>
    </alternativeName>
</protein>
<sequence length="270" mass="29807">MTEQYQHRARKRFGQNFLHDAGVIDRILRSIHAKPEDRMLEIGPGQGALTEGLLGSGAQLDVVELDKDLIPILNQQFAGKSNFNLHQGDALKFDFNTLGAAPGSLRVVGNLPYNISTPLIFHLLQNAGLIRDMHFMLQKEVVERLAAGPGGGDWGRLSIMVQYHCRVEHLFNVGPGAFNPPPKVDSAIVRLVPHAVLPHPAKDHRLLERIVREAFNQRRKTLRNTLKALLSSAEIEAAGVDGSLRPEQLDLAAFVRLADQLADQPKPATD</sequence>
<keyword id="KW-0963">Cytoplasm</keyword>
<keyword id="KW-0489">Methyltransferase</keyword>
<keyword id="KW-0694">RNA-binding</keyword>
<keyword id="KW-0698">rRNA processing</keyword>
<keyword id="KW-0949">S-adenosyl-L-methionine</keyword>
<keyword id="KW-0808">Transferase</keyword>
<proteinExistence type="inferred from homology"/>
<accession>Q4K4X5</accession>
<feature type="chain" id="PRO_0000257322" description="Ribosomal RNA small subunit methyltransferase A">
    <location>
        <begin position="1"/>
        <end position="270"/>
    </location>
</feature>
<feature type="binding site" evidence="1">
    <location>
        <position position="16"/>
    </location>
    <ligand>
        <name>S-adenosyl-L-methionine</name>
        <dbReference type="ChEBI" id="CHEBI:59789"/>
    </ligand>
</feature>
<feature type="binding site" evidence="1">
    <location>
        <position position="18"/>
    </location>
    <ligand>
        <name>S-adenosyl-L-methionine</name>
        <dbReference type="ChEBI" id="CHEBI:59789"/>
    </ligand>
</feature>
<feature type="binding site" evidence="1">
    <location>
        <position position="43"/>
    </location>
    <ligand>
        <name>S-adenosyl-L-methionine</name>
        <dbReference type="ChEBI" id="CHEBI:59789"/>
    </ligand>
</feature>
<feature type="binding site" evidence="1">
    <location>
        <position position="64"/>
    </location>
    <ligand>
        <name>S-adenosyl-L-methionine</name>
        <dbReference type="ChEBI" id="CHEBI:59789"/>
    </ligand>
</feature>
<feature type="binding site" evidence="1">
    <location>
        <position position="89"/>
    </location>
    <ligand>
        <name>S-adenosyl-L-methionine</name>
        <dbReference type="ChEBI" id="CHEBI:59789"/>
    </ligand>
</feature>
<feature type="binding site" evidence="1">
    <location>
        <position position="110"/>
    </location>
    <ligand>
        <name>S-adenosyl-L-methionine</name>
        <dbReference type="ChEBI" id="CHEBI:59789"/>
    </ligand>
</feature>
<dbReference type="EC" id="2.1.1.182" evidence="1"/>
<dbReference type="EMBL" id="CP000076">
    <property type="protein sequence ID" value="AAY94842.1"/>
    <property type="molecule type" value="Genomic_DNA"/>
</dbReference>
<dbReference type="RefSeq" id="WP_011063827.1">
    <property type="nucleotide sequence ID" value="NC_004129.6"/>
</dbReference>
<dbReference type="SMR" id="Q4K4X5"/>
<dbReference type="STRING" id="220664.PFL_5649"/>
<dbReference type="GeneID" id="57478599"/>
<dbReference type="KEGG" id="pfl:PFL_5649"/>
<dbReference type="PATRIC" id="fig|220664.5.peg.5761"/>
<dbReference type="eggNOG" id="COG0030">
    <property type="taxonomic scope" value="Bacteria"/>
</dbReference>
<dbReference type="HOGENOM" id="CLU_041220_0_1_6"/>
<dbReference type="Proteomes" id="UP000008540">
    <property type="component" value="Chromosome"/>
</dbReference>
<dbReference type="GO" id="GO:0005829">
    <property type="term" value="C:cytosol"/>
    <property type="evidence" value="ECO:0007669"/>
    <property type="project" value="TreeGrafter"/>
</dbReference>
<dbReference type="GO" id="GO:0052908">
    <property type="term" value="F:16S rRNA (adenine(1518)-N(6)/adenine(1519)-N(6))-dimethyltransferase activity"/>
    <property type="evidence" value="ECO:0007669"/>
    <property type="project" value="UniProtKB-EC"/>
</dbReference>
<dbReference type="GO" id="GO:0003723">
    <property type="term" value="F:RNA binding"/>
    <property type="evidence" value="ECO:0007669"/>
    <property type="project" value="UniProtKB-KW"/>
</dbReference>
<dbReference type="CDD" id="cd02440">
    <property type="entry name" value="AdoMet_MTases"/>
    <property type="match status" value="1"/>
</dbReference>
<dbReference type="FunFam" id="1.10.8.100:FF:000001">
    <property type="entry name" value="Ribosomal RNA small subunit methyltransferase A"/>
    <property type="match status" value="1"/>
</dbReference>
<dbReference type="Gene3D" id="1.10.8.100">
    <property type="entry name" value="Ribosomal RNA adenine dimethylase-like, domain 2"/>
    <property type="match status" value="1"/>
</dbReference>
<dbReference type="Gene3D" id="3.40.50.150">
    <property type="entry name" value="Vaccinia Virus protein VP39"/>
    <property type="match status" value="1"/>
</dbReference>
<dbReference type="HAMAP" id="MF_00607">
    <property type="entry name" value="16SrRNA_methyltr_A"/>
    <property type="match status" value="1"/>
</dbReference>
<dbReference type="InterPro" id="IPR001737">
    <property type="entry name" value="KsgA/Erm"/>
</dbReference>
<dbReference type="InterPro" id="IPR023165">
    <property type="entry name" value="rRNA_Ade_diMease-like_C"/>
</dbReference>
<dbReference type="InterPro" id="IPR020596">
    <property type="entry name" value="rRNA_Ade_Mease_Trfase_CS"/>
</dbReference>
<dbReference type="InterPro" id="IPR020598">
    <property type="entry name" value="rRNA_Ade_methylase_Trfase_N"/>
</dbReference>
<dbReference type="InterPro" id="IPR011530">
    <property type="entry name" value="rRNA_adenine_dimethylase"/>
</dbReference>
<dbReference type="InterPro" id="IPR029063">
    <property type="entry name" value="SAM-dependent_MTases_sf"/>
</dbReference>
<dbReference type="NCBIfam" id="TIGR00755">
    <property type="entry name" value="ksgA"/>
    <property type="match status" value="1"/>
</dbReference>
<dbReference type="PANTHER" id="PTHR11727">
    <property type="entry name" value="DIMETHYLADENOSINE TRANSFERASE"/>
    <property type="match status" value="1"/>
</dbReference>
<dbReference type="PANTHER" id="PTHR11727:SF7">
    <property type="entry name" value="DIMETHYLADENOSINE TRANSFERASE-RELATED"/>
    <property type="match status" value="1"/>
</dbReference>
<dbReference type="Pfam" id="PF00398">
    <property type="entry name" value="RrnaAD"/>
    <property type="match status" value="1"/>
</dbReference>
<dbReference type="SMART" id="SM00650">
    <property type="entry name" value="rADc"/>
    <property type="match status" value="1"/>
</dbReference>
<dbReference type="SUPFAM" id="SSF53335">
    <property type="entry name" value="S-adenosyl-L-methionine-dependent methyltransferases"/>
    <property type="match status" value="1"/>
</dbReference>
<dbReference type="PROSITE" id="PS01131">
    <property type="entry name" value="RRNA_A_DIMETH"/>
    <property type="match status" value="1"/>
</dbReference>
<dbReference type="PROSITE" id="PS51689">
    <property type="entry name" value="SAM_RNA_A_N6_MT"/>
    <property type="match status" value="1"/>
</dbReference>
<organism>
    <name type="scientific">Pseudomonas fluorescens (strain ATCC BAA-477 / NRRL B-23932 / Pf-5)</name>
    <dbReference type="NCBI Taxonomy" id="220664"/>
    <lineage>
        <taxon>Bacteria</taxon>
        <taxon>Pseudomonadati</taxon>
        <taxon>Pseudomonadota</taxon>
        <taxon>Gammaproteobacteria</taxon>
        <taxon>Pseudomonadales</taxon>
        <taxon>Pseudomonadaceae</taxon>
        <taxon>Pseudomonas</taxon>
    </lineage>
</organism>